<dbReference type="EC" id="6.1.1.5" evidence="1"/>
<dbReference type="EMBL" id="AF180145">
    <property type="protein sequence ID" value="AAD56932.1"/>
    <property type="molecule type" value="Genomic_DNA"/>
</dbReference>
<dbReference type="EMBL" id="AE008692">
    <property type="protein sequence ID" value="AAV88947.1"/>
    <property type="molecule type" value="Genomic_DNA"/>
</dbReference>
<dbReference type="RefSeq" id="WP_011240252.1">
    <property type="nucleotide sequence ID" value="NZ_CP035711.1"/>
</dbReference>
<dbReference type="SMR" id="Q5NQQ7"/>
<dbReference type="STRING" id="264203.ZMO0323"/>
<dbReference type="KEGG" id="zmo:ZMO0323"/>
<dbReference type="eggNOG" id="COG0060">
    <property type="taxonomic scope" value="Bacteria"/>
</dbReference>
<dbReference type="HOGENOM" id="CLU_001493_7_1_5"/>
<dbReference type="Proteomes" id="UP000001173">
    <property type="component" value="Chromosome"/>
</dbReference>
<dbReference type="GO" id="GO:0005829">
    <property type="term" value="C:cytosol"/>
    <property type="evidence" value="ECO:0007669"/>
    <property type="project" value="TreeGrafter"/>
</dbReference>
<dbReference type="GO" id="GO:0002161">
    <property type="term" value="F:aminoacyl-tRNA deacylase activity"/>
    <property type="evidence" value="ECO:0007669"/>
    <property type="project" value="InterPro"/>
</dbReference>
<dbReference type="GO" id="GO:0005524">
    <property type="term" value="F:ATP binding"/>
    <property type="evidence" value="ECO:0007669"/>
    <property type="project" value="UniProtKB-UniRule"/>
</dbReference>
<dbReference type="GO" id="GO:0004822">
    <property type="term" value="F:isoleucine-tRNA ligase activity"/>
    <property type="evidence" value="ECO:0007669"/>
    <property type="project" value="UniProtKB-UniRule"/>
</dbReference>
<dbReference type="GO" id="GO:0000049">
    <property type="term" value="F:tRNA binding"/>
    <property type="evidence" value="ECO:0007669"/>
    <property type="project" value="InterPro"/>
</dbReference>
<dbReference type="GO" id="GO:0008270">
    <property type="term" value="F:zinc ion binding"/>
    <property type="evidence" value="ECO:0007669"/>
    <property type="project" value="UniProtKB-UniRule"/>
</dbReference>
<dbReference type="GO" id="GO:0006428">
    <property type="term" value="P:isoleucyl-tRNA aminoacylation"/>
    <property type="evidence" value="ECO:0007669"/>
    <property type="project" value="UniProtKB-UniRule"/>
</dbReference>
<dbReference type="CDD" id="cd07960">
    <property type="entry name" value="Anticodon_Ia_Ile_BEm"/>
    <property type="match status" value="1"/>
</dbReference>
<dbReference type="FunFam" id="3.40.50.620:FF:000042">
    <property type="entry name" value="Isoleucine--tRNA ligase"/>
    <property type="match status" value="1"/>
</dbReference>
<dbReference type="Gene3D" id="1.10.730.20">
    <property type="match status" value="1"/>
</dbReference>
<dbReference type="Gene3D" id="3.40.50.620">
    <property type="entry name" value="HUPs"/>
    <property type="match status" value="2"/>
</dbReference>
<dbReference type="Gene3D" id="1.10.10.830">
    <property type="entry name" value="Ile-tRNA synthetase CP2 domain-like"/>
    <property type="match status" value="1"/>
</dbReference>
<dbReference type="Gene3D" id="3.90.740.10">
    <property type="entry name" value="Valyl/Leucyl/Isoleucyl-tRNA synthetase, editing domain"/>
    <property type="match status" value="1"/>
</dbReference>
<dbReference type="HAMAP" id="MF_02002">
    <property type="entry name" value="Ile_tRNA_synth_type1"/>
    <property type="match status" value="1"/>
</dbReference>
<dbReference type="InterPro" id="IPR001412">
    <property type="entry name" value="aa-tRNA-synth_I_CS"/>
</dbReference>
<dbReference type="InterPro" id="IPR002300">
    <property type="entry name" value="aa-tRNA-synth_Ia"/>
</dbReference>
<dbReference type="InterPro" id="IPR033708">
    <property type="entry name" value="Anticodon_Ile_BEm"/>
</dbReference>
<dbReference type="InterPro" id="IPR002301">
    <property type="entry name" value="Ile-tRNA-ligase"/>
</dbReference>
<dbReference type="InterPro" id="IPR023585">
    <property type="entry name" value="Ile-tRNA-ligase_type1"/>
</dbReference>
<dbReference type="InterPro" id="IPR050081">
    <property type="entry name" value="Ile-tRNA_ligase"/>
</dbReference>
<dbReference type="InterPro" id="IPR013155">
    <property type="entry name" value="M/V/L/I-tRNA-synth_anticd-bd"/>
</dbReference>
<dbReference type="InterPro" id="IPR014729">
    <property type="entry name" value="Rossmann-like_a/b/a_fold"/>
</dbReference>
<dbReference type="InterPro" id="IPR009080">
    <property type="entry name" value="tRNAsynth_Ia_anticodon-bd"/>
</dbReference>
<dbReference type="InterPro" id="IPR009008">
    <property type="entry name" value="Val/Leu/Ile-tRNA-synth_edit"/>
</dbReference>
<dbReference type="NCBIfam" id="TIGR00392">
    <property type="entry name" value="ileS"/>
    <property type="match status" value="1"/>
</dbReference>
<dbReference type="PANTHER" id="PTHR42765:SF1">
    <property type="entry name" value="ISOLEUCINE--TRNA LIGASE, MITOCHONDRIAL"/>
    <property type="match status" value="1"/>
</dbReference>
<dbReference type="PANTHER" id="PTHR42765">
    <property type="entry name" value="SOLEUCYL-TRNA SYNTHETASE"/>
    <property type="match status" value="1"/>
</dbReference>
<dbReference type="Pfam" id="PF08264">
    <property type="entry name" value="Anticodon_1"/>
    <property type="match status" value="1"/>
</dbReference>
<dbReference type="Pfam" id="PF00133">
    <property type="entry name" value="tRNA-synt_1"/>
    <property type="match status" value="1"/>
</dbReference>
<dbReference type="PRINTS" id="PR00984">
    <property type="entry name" value="TRNASYNTHILE"/>
</dbReference>
<dbReference type="SUPFAM" id="SSF47323">
    <property type="entry name" value="Anticodon-binding domain of a subclass of class I aminoacyl-tRNA synthetases"/>
    <property type="match status" value="1"/>
</dbReference>
<dbReference type="SUPFAM" id="SSF52374">
    <property type="entry name" value="Nucleotidylyl transferase"/>
    <property type="match status" value="1"/>
</dbReference>
<dbReference type="SUPFAM" id="SSF50677">
    <property type="entry name" value="ValRS/IleRS/LeuRS editing domain"/>
    <property type="match status" value="1"/>
</dbReference>
<dbReference type="PROSITE" id="PS00178">
    <property type="entry name" value="AA_TRNA_LIGASE_I"/>
    <property type="match status" value="1"/>
</dbReference>
<organism>
    <name type="scientific">Zymomonas mobilis subsp. mobilis (strain ATCC 31821 / ZM4 / CP4)</name>
    <dbReference type="NCBI Taxonomy" id="264203"/>
    <lineage>
        <taxon>Bacteria</taxon>
        <taxon>Pseudomonadati</taxon>
        <taxon>Pseudomonadota</taxon>
        <taxon>Alphaproteobacteria</taxon>
        <taxon>Sphingomonadales</taxon>
        <taxon>Zymomonadaceae</taxon>
        <taxon>Zymomonas</taxon>
    </lineage>
</organism>
<reference key="1">
    <citation type="submission" date="1999-08" db="EMBL/GenBank/DDBJ databases">
        <authorList>
            <person name="Lee H.J."/>
            <person name="Kang H.S."/>
        </authorList>
    </citation>
    <scope>NUCLEOTIDE SEQUENCE [GENOMIC DNA]</scope>
    <source>
        <strain>ATCC 31821 / ZM4 / CP4</strain>
    </source>
</reference>
<reference key="2">
    <citation type="journal article" date="2005" name="Nat. Biotechnol.">
        <title>The genome sequence of the ethanologenic bacterium Zymomonas mobilis ZM4.</title>
        <authorList>
            <person name="Seo J.-S."/>
            <person name="Chong H."/>
            <person name="Park H.S."/>
            <person name="Yoon K.-O."/>
            <person name="Jung C."/>
            <person name="Kim J.J."/>
            <person name="Hong J.H."/>
            <person name="Kim H."/>
            <person name="Kim J.-H."/>
            <person name="Kil J.-I."/>
            <person name="Park C.J."/>
            <person name="Oh H.-M."/>
            <person name="Lee J.-S."/>
            <person name="Jin S.-J."/>
            <person name="Um H.-W."/>
            <person name="Lee H.-J."/>
            <person name="Oh S.-J."/>
            <person name="Kim J.Y."/>
            <person name="Kang H.L."/>
            <person name="Lee S.Y."/>
            <person name="Lee K.J."/>
            <person name="Kang H.S."/>
        </authorList>
    </citation>
    <scope>NUCLEOTIDE SEQUENCE [LARGE SCALE GENOMIC DNA]</scope>
    <source>
        <strain>ATCC 31821 / ZM4 / CP4</strain>
    </source>
</reference>
<protein>
    <recommendedName>
        <fullName evidence="1">Isoleucine--tRNA ligase</fullName>
        <ecNumber evidence="1">6.1.1.5</ecNumber>
    </recommendedName>
    <alternativeName>
        <fullName evidence="1">Isoleucyl-tRNA synthetase</fullName>
        <shortName evidence="1">IleRS</shortName>
    </alternativeName>
</protein>
<proteinExistence type="inferred from homology"/>
<keyword id="KW-0030">Aminoacyl-tRNA synthetase</keyword>
<keyword id="KW-0067">ATP-binding</keyword>
<keyword id="KW-0963">Cytoplasm</keyword>
<keyword id="KW-0436">Ligase</keyword>
<keyword id="KW-0479">Metal-binding</keyword>
<keyword id="KW-0547">Nucleotide-binding</keyword>
<keyword id="KW-0648">Protein biosynthesis</keyword>
<keyword id="KW-1185">Reference proteome</keyword>
<keyword id="KW-0862">Zinc</keyword>
<feature type="chain" id="PRO_0000098513" description="Isoleucine--tRNA ligase">
    <location>
        <begin position="1"/>
        <end position="941"/>
    </location>
</feature>
<feature type="short sequence motif" description="'HIGH' region">
    <location>
        <begin position="69"/>
        <end position="79"/>
    </location>
</feature>
<feature type="short sequence motif" description="'KMSKS' region">
    <location>
        <begin position="630"/>
        <end position="634"/>
    </location>
</feature>
<feature type="binding site" evidence="1">
    <location>
        <position position="589"/>
    </location>
    <ligand>
        <name>L-isoleucyl-5'-AMP</name>
        <dbReference type="ChEBI" id="CHEBI:178002"/>
    </ligand>
</feature>
<feature type="binding site" evidence="1">
    <location>
        <position position="633"/>
    </location>
    <ligand>
        <name>ATP</name>
        <dbReference type="ChEBI" id="CHEBI:30616"/>
    </ligand>
</feature>
<feature type="binding site" evidence="1">
    <location>
        <position position="915"/>
    </location>
    <ligand>
        <name>Zn(2+)</name>
        <dbReference type="ChEBI" id="CHEBI:29105"/>
    </ligand>
</feature>
<feature type="binding site" evidence="1">
    <location>
        <position position="918"/>
    </location>
    <ligand>
        <name>Zn(2+)</name>
        <dbReference type="ChEBI" id="CHEBI:29105"/>
    </ligand>
</feature>
<feature type="binding site" evidence="1">
    <location>
        <position position="932"/>
    </location>
    <ligand>
        <name>Zn(2+)</name>
        <dbReference type="ChEBI" id="CHEBI:29105"/>
    </ligand>
</feature>
<feature type="binding site" evidence="1">
    <location>
        <position position="935"/>
    </location>
    <ligand>
        <name>Zn(2+)</name>
        <dbReference type="ChEBI" id="CHEBI:29105"/>
    </ligand>
</feature>
<feature type="sequence conflict" description="In Ref. 1; AAD56932." evidence="2" ref="1">
    <original>SQT</original>
    <variation>TKP</variation>
    <location>
        <begin position="92"/>
        <end position="94"/>
    </location>
</feature>
<feature type="sequence conflict" description="In Ref. 1; AAD56932." evidence="2" ref="1">
    <original>E</original>
    <variation>K</variation>
    <location>
        <position position="140"/>
    </location>
</feature>
<feature type="sequence conflict" description="In Ref. 1; AAD56932." evidence="2" ref="1">
    <original>A</original>
    <variation>S</variation>
    <location>
        <position position="181"/>
    </location>
</feature>
<accession>Q5NQQ7</accession>
<accession>Q9RNJ5</accession>
<comment type="function">
    <text evidence="1">Catalyzes the attachment of isoleucine to tRNA(Ile). As IleRS can inadvertently accommodate and process structurally similar amino acids such as valine, to avoid such errors it has two additional distinct tRNA(Ile)-dependent editing activities. One activity is designated as 'pretransfer' editing and involves the hydrolysis of activated Val-AMP. The other activity is designated 'posttransfer' editing and involves deacylation of mischarged Val-tRNA(Ile).</text>
</comment>
<comment type="catalytic activity">
    <reaction evidence="1">
        <text>tRNA(Ile) + L-isoleucine + ATP = L-isoleucyl-tRNA(Ile) + AMP + diphosphate</text>
        <dbReference type="Rhea" id="RHEA:11060"/>
        <dbReference type="Rhea" id="RHEA-COMP:9666"/>
        <dbReference type="Rhea" id="RHEA-COMP:9695"/>
        <dbReference type="ChEBI" id="CHEBI:30616"/>
        <dbReference type="ChEBI" id="CHEBI:33019"/>
        <dbReference type="ChEBI" id="CHEBI:58045"/>
        <dbReference type="ChEBI" id="CHEBI:78442"/>
        <dbReference type="ChEBI" id="CHEBI:78528"/>
        <dbReference type="ChEBI" id="CHEBI:456215"/>
        <dbReference type="EC" id="6.1.1.5"/>
    </reaction>
</comment>
<comment type="cofactor">
    <cofactor evidence="1">
        <name>Zn(2+)</name>
        <dbReference type="ChEBI" id="CHEBI:29105"/>
    </cofactor>
    <text evidence="1">Binds 1 zinc ion per subunit.</text>
</comment>
<comment type="subunit">
    <text evidence="1">Monomer.</text>
</comment>
<comment type="subcellular location">
    <subcellularLocation>
        <location evidence="1">Cytoplasm</location>
    </subcellularLocation>
</comment>
<comment type="domain">
    <text evidence="1">IleRS has two distinct active sites: one for aminoacylation and one for editing. The misactivated valine is translocated from the active site to the editing site, which sterically excludes the correctly activated isoleucine. The single editing site contains two valyl binding pockets, one specific for each substrate (Val-AMP or Val-tRNA(Ile)).</text>
</comment>
<comment type="similarity">
    <text evidence="1">Belongs to the class-I aminoacyl-tRNA synthetase family. IleS type 1 subfamily.</text>
</comment>
<gene>
    <name evidence="1" type="primary">ileS</name>
    <name type="ordered locus">ZMO0323</name>
</gene>
<sequence>MSDQKSADATQARDWRPTVFLPKTSFPMKAGLAKKEPEILARWQKEDLYQQLREQRKGAERFILHDGPPYANGDIHIGHALNKILKDIIMRSQTLLGKDVPYIPGWDCHGLPIEWKVEEQFRKKKLNVDKDVNAVEFRQECRKYAVHWVDTQRQEFKRLGVLGEWDNPYLTMNFEAEAIIAGELMRFSETGQIYRGAKPVLWSVVEKTALAEAEVDYADVDSTTIDLAFKITDSKIPELVGGYAVIWTTTPWTIPANRALAYGPDIDYVLVDLNGKHYLFAEALLEDSLKRIGHEGDAPVLWRGKGAELDGSIAQHPMFEKGGFFAEPRPFLGGSHVTTEAGTGIVHMAPDYGEDDFLLCKAHNIDPVFAVEDDGRYRKDWLWMGGEGLVISPKINAADGPICSDLREVGALLATSVLHHSYPHSWRSKAKLIYRCTPQWFIALDRPVEKGAIAGKTLRETALKAIDEVSWFPAKGKNRIQTMVEGRPDWVISRQRAWGVPITLYVNRESGDYLRDPEVNARILAAFRKEGADAWFKANHQLFLGDKYRLEDYEPVNDILDVWFDSGSTHAFVVEARYGEGTRAQLYLEGSDQHRGWFQSSLLESCGSRGHAPYEAVLTHGFTLDGTGRKMSKSVGNVIDPLKVINESGADILRMWVASTDYNEDVRISKEVLSGTSDGYRKLRNSFRYLLGALEGFSEEEKVDLADLPELEKYILHLLAELDQALHESVNGFAFNRYLRLLSDFVNNDLSAFFFDIRKDRLYCDVGEAAPQGTEERRAYRTVLDILFHALVRYAAPILCFTAEEVWLHRFPDAGSVHLSVWPEVDGQWKNAVLGEKWAVIREQRQIVTEKIEPLRREKIVGSSLEAEVTLPVDAATAKILSSVDFSEICITAKINLVDASDAAITVDRTQNHKCGRCWQHLPEVEEDGALCDRCKSVVGE</sequence>
<name>SYI_ZYMMO</name>
<evidence type="ECO:0000255" key="1">
    <source>
        <dbReference type="HAMAP-Rule" id="MF_02002"/>
    </source>
</evidence>
<evidence type="ECO:0000305" key="2"/>